<proteinExistence type="inferred from homology"/>
<dbReference type="EC" id="4.2.1.11" evidence="1"/>
<dbReference type="EMBL" id="AE016853">
    <property type="protein sequence ID" value="AAO55074.1"/>
    <property type="molecule type" value="Genomic_DNA"/>
</dbReference>
<dbReference type="RefSeq" id="NP_791379.1">
    <property type="nucleotide sequence ID" value="NC_004578.1"/>
</dbReference>
<dbReference type="SMR" id="Q886M3"/>
<dbReference type="STRING" id="223283.PSPTO_1554"/>
<dbReference type="GeneID" id="1183191"/>
<dbReference type="KEGG" id="pst:PSPTO_1554"/>
<dbReference type="PATRIC" id="fig|223283.9.peg.1580"/>
<dbReference type="eggNOG" id="COG0148">
    <property type="taxonomic scope" value="Bacteria"/>
</dbReference>
<dbReference type="HOGENOM" id="CLU_031223_2_1_6"/>
<dbReference type="OrthoDB" id="9804716at2"/>
<dbReference type="PhylomeDB" id="Q886M3"/>
<dbReference type="UniPathway" id="UPA00109">
    <property type="reaction ID" value="UER00187"/>
</dbReference>
<dbReference type="Proteomes" id="UP000002515">
    <property type="component" value="Chromosome"/>
</dbReference>
<dbReference type="GO" id="GO:0009986">
    <property type="term" value="C:cell surface"/>
    <property type="evidence" value="ECO:0007669"/>
    <property type="project" value="UniProtKB-SubCell"/>
</dbReference>
<dbReference type="GO" id="GO:0005576">
    <property type="term" value="C:extracellular region"/>
    <property type="evidence" value="ECO:0007669"/>
    <property type="project" value="UniProtKB-SubCell"/>
</dbReference>
<dbReference type="GO" id="GO:0000015">
    <property type="term" value="C:phosphopyruvate hydratase complex"/>
    <property type="evidence" value="ECO:0007669"/>
    <property type="project" value="InterPro"/>
</dbReference>
<dbReference type="GO" id="GO:0000287">
    <property type="term" value="F:magnesium ion binding"/>
    <property type="evidence" value="ECO:0007669"/>
    <property type="project" value="UniProtKB-UniRule"/>
</dbReference>
<dbReference type="GO" id="GO:0004634">
    <property type="term" value="F:phosphopyruvate hydratase activity"/>
    <property type="evidence" value="ECO:0007669"/>
    <property type="project" value="UniProtKB-UniRule"/>
</dbReference>
<dbReference type="GO" id="GO:0006096">
    <property type="term" value="P:glycolytic process"/>
    <property type="evidence" value="ECO:0007669"/>
    <property type="project" value="UniProtKB-UniRule"/>
</dbReference>
<dbReference type="CDD" id="cd03313">
    <property type="entry name" value="enolase"/>
    <property type="match status" value="1"/>
</dbReference>
<dbReference type="FunFam" id="3.20.20.120:FF:000001">
    <property type="entry name" value="Enolase"/>
    <property type="match status" value="1"/>
</dbReference>
<dbReference type="FunFam" id="3.30.390.10:FF:000001">
    <property type="entry name" value="Enolase"/>
    <property type="match status" value="1"/>
</dbReference>
<dbReference type="Gene3D" id="3.20.20.120">
    <property type="entry name" value="Enolase-like C-terminal domain"/>
    <property type="match status" value="1"/>
</dbReference>
<dbReference type="Gene3D" id="3.30.390.10">
    <property type="entry name" value="Enolase-like, N-terminal domain"/>
    <property type="match status" value="1"/>
</dbReference>
<dbReference type="HAMAP" id="MF_00318">
    <property type="entry name" value="Enolase"/>
    <property type="match status" value="1"/>
</dbReference>
<dbReference type="InterPro" id="IPR000941">
    <property type="entry name" value="Enolase"/>
</dbReference>
<dbReference type="InterPro" id="IPR036849">
    <property type="entry name" value="Enolase-like_C_sf"/>
</dbReference>
<dbReference type="InterPro" id="IPR029017">
    <property type="entry name" value="Enolase-like_N"/>
</dbReference>
<dbReference type="InterPro" id="IPR020810">
    <property type="entry name" value="Enolase_C"/>
</dbReference>
<dbReference type="InterPro" id="IPR020809">
    <property type="entry name" value="Enolase_CS"/>
</dbReference>
<dbReference type="InterPro" id="IPR020811">
    <property type="entry name" value="Enolase_N"/>
</dbReference>
<dbReference type="NCBIfam" id="TIGR01060">
    <property type="entry name" value="eno"/>
    <property type="match status" value="1"/>
</dbReference>
<dbReference type="PANTHER" id="PTHR11902">
    <property type="entry name" value="ENOLASE"/>
    <property type="match status" value="1"/>
</dbReference>
<dbReference type="PANTHER" id="PTHR11902:SF1">
    <property type="entry name" value="ENOLASE"/>
    <property type="match status" value="1"/>
</dbReference>
<dbReference type="Pfam" id="PF00113">
    <property type="entry name" value="Enolase_C"/>
    <property type="match status" value="1"/>
</dbReference>
<dbReference type="Pfam" id="PF03952">
    <property type="entry name" value="Enolase_N"/>
    <property type="match status" value="1"/>
</dbReference>
<dbReference type="PIRSF" id="PIRSF001400">
    <property type="entry name" value="Enolase"/>
    <property type="match status" value="1"/>
</dbReference>
<dbReference type="PRINTS" id="PR00148">
    <property type="entry name" value="ENOLASE"/>
</dbReference>
<dbReference type="SFLD" id="SFLDS00001">
    <property type="entry name" value="Enolase"/>
    <property type="match status" value="1"/>
</dbReference>
<dbReference type="SFLD" id="SFLDF00002">
    <property type="entry name" value="enolase"/>
    <property type="match status" value="1"/>
</dbReference>
<dbReference type="SMART" id="SM01192">
    <property type="entry name" value="Enolase_C"/>
    <property type="match status" value="1"/>
</dbReference>
<dbReference type="SMART" id="SM01193">
    <property type="entry name" value="Enolase_N"/>
    <property type="match status" value="1"/>
</dbReference>
<dbReference type="SUPFAM" id="SSF51604">
    <property type="entry name" value="Enolase C-terminal domain-like"/>
    <property type="match status" value="1"/>
</dbReference>
<dbReference type="SUPFAM" id="SSF54826">
    <property type="entry name" value="Enolase N-terminal domain-like"/>
    <property type="match status" value="1"/>
</dbReference>
<dbReference type="PROSITE" id="PS00164">
    <property type="entry name" value="ENOLASE"/>
    <property type="match status" value="1"/>
</dbReference>
<accession>Q886M3</accession>
<reference key="1">
    <citation type="journal article" date="2003" name="Proc. Natl. Acad. Sci. U.S.A.">
        <title>The complete genome sequence of the Arabidopsis and tomato pathogen Pseudomonas syringae pv. tomato DC3000.</title>
        <authorList>
            <person name="Buell C.R."/>
            <person name="Joardar V."/>
            <person name="Lindeberg M."/>
            <person name="Selengut J."/>
            <person name="Paulsen I.T."/>
            <person name="Gwinn M.L."/>
            <person name="Dodson R.J."/>
            <person name="DeBoy R.T."/>
            <person name="Durkin A.S."/>
            <person name="Kolonay J.F."/>
            <person name="Madupu R."/>
            <person name="Daugherty S.C."/>
            <person name="Brinkac L.M."/>
            <person name="Beanan M.J."/>
            <person name="Haft D.H."/>
            <person name="Nelson W.C."/>
            <person name="Davidsen T.M."/>
            <person name="Zafar N."/>
            <person name="Zhou L."/>
            <person name="Liu J."/>
            <person name="Yuan Q."/>
            <person name="Khouri H.M."/>
            <person name="Fedorova N.B."/>
            <person name="Tran B."/>
            <person name="Russell D."/>
            <person name="Berry K.J."/>
            <person name="Utterback T.R."/>
            <person name="Van Aken S.E."/>
            <person name="Feldblyum T.V."/>
            <person name="D'Ascenzo M."/>
            <person name="Deng W.-L."/>
            <person name="Ramos A.R."/>
            <person name="Alfano J.R."/>
            <person name="Cartinhour S."/>
            <person name="Chatterjee A.K."/>
            <person name="Delaney T.P."/>
            <person name="Lazarowitz S.G."/>
            <person name="Martin G.B."/>
            <person name="Schneider D.J."/>
            <person name="Tang X."/>
            <person name="Bender C.L."/>
            <person name="White O."/>
            <person name="Fraser C.M."/>
            <person name="Collmer A."/>
        </authorList>
    </citation>
    <scope>NUCLEOTIDE SEQUENCE [LARGE SCALE GENOMIC DNA]</scope>
    <source>
        <strain>ATCC BAA-871 / DC3000</strain>
    </source>
</reference>
<comment type="function">
    <text evidence="1">Catalyzes the reversible conversion of 2-phosphoglycerate (2-PG) into phosphoenolpyruvate (PEP). It is essential for the degradation of carbohydrates via glycolysis.</text>
</comment>
<comment type="catalytic activity">
    <reaction evidence="1">
        <text>(2R)-2-phosphoglycerate = phosphoenolpyruvate + H2O</text>
        <dbReference type="Rhea" id="RHEA:10164"/>
        <dbReference type="ChEBI" id="CHEBI:15377"/>
        <dbReference type="ChEBI" id="CHEBI:58289"/>
        <dbReference type="ChEBI" id="CHEBI:58702"/>
        <dbReference type="EC" id="4.2.1.11"/>
    </reaction>
</comment>
<comment type="cofactor">
    <cofactor evidence="1">
        <name>Mg(2+)</name>
        <dbReference type="ChEBI" id="CHEBI:18420"/>
    </cofactor>
    <text evidence="1">Binds a second Mg(2+) ion via substrate during catalysis.</text>
</comment>
<comment type="pathway">
    <text evidence="1">Carbohydrate degradation; glycolysis; pyruvate from D-glyceraldehyde 3-phosphate: step 4/5.</text>
</comment>
<comment type="subunit">
    <text evidence="1">Component of the RNA degradosome, a multiprotein complex involved in RNA processing and mRNA degradation.</text>
</comment>
<comment type="subcellular location">
    <subcellularLocation>
        <location evidence="1">Cytoplasm</location>
    </subcellularLocation>
    <subcellularLocation>
        <location evidence="1">Secreted</location>
    </subcellularLocation>
    <subcellularLocation>
        <location evidence="1">Cell surface</location>
    </subcellularLocation>
    <text evidence="1">Fractions of enolase are present in both the cytoplasm and on the cell surface.</text>
</comment>
<comment type="similarity">
    <text evidence="1">Belongs to the enolase family.</text>
</comment>
<feature type="chain" id="PRO_0000133951" description="Enolase 1">
    <location>
        <begin position="1"/>
        <end position="428"/>
    </location>
</feature>
<feature type="active site" description="Proton donor" evidence="1">
    <location>
        <position position="209"/>
    </location>
</feature>
<feature type="active site" description="Proton acceptor" evidence="1">
    <location>
        <position position="340"/>
    </location>
</feature>
<feature type="binding site" evidence="1">
    <location>
        <position position="167"/>
    </location>
    <ligand>
        <name>(2R)-2-phosphoglycerate</name>
        <dbReference type="ChEBI" id="CHEBI:58289"/>
    </ligand>
</feature>
<feature type="binding site" evidence="1">
    <location>
        <position position="246"/>
    </location>
    <ligand>
        <name>Mg(2+)</name>
        <dbReference type="ChEBI" id="CHEBI:18420"/>
    </ligand>
</feature>
<feature type="binding site" evidence="1">
    <location>
        <position position="288"/>
    </location>
    <ligand>
        <name>Mg(2+)</name>
        <dbReference type="ChEBI" id="CHEBI:18420"/>
    </ligand>
</feature>
<feature type="binding site" evidence="1">
    <location>
        <position position="315"/>
    </location>
    <ligand>
        <name>Mg(2+)</name>
        <dbReference type="ChEBI" id="CHEBI:18420"/>
    </ligand>
</feature>
<feature type="binding site" evidence="1">
    <location>
        <position position="340"/>
    </location>
    <ligand>
        <name>(2R)-2-phosphoglycerate</name>
        <dbReference type="ChEBI" id="CHEBI:58289"/>
    </ligand>
</feature>
<feature type="binding site" evidence="1">
    <location>
        <position position="369"/>
    </location>
    <ligand>
        <name>(2R)-2-phosphoglycerate</name>
        <dbReference type="ChEBI" id="CHEBI:58289"/>
    </ligand>
</feature>
<feature type="binding site" evidence="1">
    <location>
        <position position="370"/>
    </location>
    <ligand>
        <name>(2R)-2-phosphoglycerate</name>
        <dbReference type="ChEBI" id="CHEBI:58289"/>
    </ligand>
</feature>
<feature type="binding site" evidence="1">
    <location>
        <position position="391"/>
    </location>
    <ligand>
        <name>(2R)-2-phosphoglycerate</name>
        <dbReference type="ChEBI" id="CHEBI:58289"/>
    </ligand>
</feature>
<keyword id="KW-0963">Cytoplasm</keyword>
<keyword id="KW-0324">Glycolysis</keyword>
<keyword id="KW-0456">Lyase</keyword>
<keyword id="KW-0460">Magnesium</keyword>
<keyword id="KW-0479">Metal-binding</keyword>
<keyword id="KW-1185">Reference proteome</keyword>
<keyword id="KW-0964">Secreted</keyword>
<protein>
    <recommendedName>
        <fullName evidence="1">Enolase 1</fullName>
        <ecNumber evidence="1">4.2.1.11</ecNumber>
    </recommendedName>
    <alternativeName>
        <fullName evidence="1">2-phospho-D-glycerate hydro-lyase 1</fullName>
    </alternativeName>
    <alternativeName>
        <fullName evidence="1">2-phosphoglycerate dehydratase 1</fullName>
    </alternativeName>
</protein>
<organism>
    <name type="scientific">Pseudomonas syringae pv. tomato (strain ATCC BAA-871 / DC3000)</name>
    <dbReference type="NCBI Taxonomy" id="223283"/>
    <lineage>
        <taxon>Bacteria</taxon>
        <taxon>Pseudomonadati</taxon>
        <taxon>Pseudomonadota</taxon>
        <taxon>Gammaproteobacteria</taxon>
        <taxon>Pseudomonadales</taxon>
        <taxon>Pseudomonadaceae</taxon>
        <taxon>Pseudomonas</taxon>
    </lineage>
</organism>
<gene>
    <name evidence="1" type="primary">eno1</name>
    <name type="synonym">eno-1</name>
    <name type="ordered locus">PSPTO_1554</name>
</gene>
<evidence type="ECO:0000255" key="1">
    <source>
        <dbReference type="HAMAP-Rule" id="MF_00318"/>
    </source>
</evidence>
<name>ENO1_PSESM</name>
<sequence length="428" mass="45623">MAKIVDIKGREVLDSRGNPTVEADVLLDNGIIGSACAPSGASTGSREALELRDGDKSRYMGKGVLKAVANINGPIRDLLLGKDPVDQKALDHAMIALDATENKASLGANAILAVSLAAAKAAAQDQDLPLYAHIANLNGTPGVYSMPVPMMNIINGGEHADNNIDIQEFMIQPVGAKSFAEALRWGTEIFHHLKAVLKARGLNTAVGDEGGFAPNLASNKEALEAIAEAVANAGYTLGTDVTLALDCAASEFYKNGKYTLSEEGEYSSAEFAEYLAELTRKHPIISIEDGLDESDWDGWKVLTEKIGEKVQLVGDDLFVTNTKILKEGIDKNIANSILIKFNQIGTLTETLEAIQMAKAAGYTAIISHRSGETEDSTIADLAVGTSAGQIKTGSLCRSDRVSKYNQLLRIEEQLGSKAVYRGRAEFRG</sequence>